<evidence type="ECO:0000255" key="1">
    <source>
        <dbReference type="HAMAP-Rule" id="MF_00505"/>
    </source>
</evidence>
<gene>
    <name evidence="1" type="primary">htpG</name>
    <name type="ordered locus">CGSHiEE_02775</name>
</gene>
<organism>
    <name type="scientific">Haemophilus influenzae (strain PittEE)</name>
    <dbReference type="NCBI Taxonomy" id="374930"/>
    <lineage>
        <taxon>Bacteria</taxon>
        <taxon>Pseudomonadati</taxon>
        <taxon>Pseudomonadota</taxon>
        <taxon>Gammaproteobacteria</taxon>
        <taxon>Pasteurellales</taxon>
        <taxon>Pasteurellaceae</taxon>
        <taxon>Haemophilus</taxon>
    </lineage>
</organism>
<reference key="1">
    <citation type="journal article" date="2007" name="Genome Biol.">
        <title>Characterization and modeling of the Haemophilus influenzae core and supragenomes based on the complete genomic sequences of Rd and 12 clinical nontypeable strains.</title>
        <authorList>
            <person name="Hogg J.S."/>
            <person name="Hu F.Z."/>
            <person name="Janto B."/>
            <person name="Boissy R."/>
            <person name="Hayes J."/>
            <person name="Keefe R."/>
            <person name="Post J.C."/>
            <person name="Ehrlich G.D."/>
        </authorList>
    </citation>
    <scope>NUCLEOTIDE SEQUENCE [LARGE SCALE GENOMIC DNA]</scope>
    <source>
        <strain>PittEE</strain>
    </source>
</reference>
<sequence>MSQNQETRGFQSEVKQLLQLMIHSLYSNKEIFLRELISNASDAADKLRFKALSNPALYEGDGDLRVRVSFDADKGTITISDNGIGMTREQVIDHLGTIAKSGTKEFLTALGQDQAKNSQLIGQFGVGFYSAFIVADKVTVKTRAAGEEADKAVLWESAGEGEYSVADIEKKSRGTDVILHLCEDEKEFLNEWRLREIIGKYSDHIGLPVEMLTKEYDDEGKECGEKWEKINKSDALWTRSKNDVSDEEYKAFYKHLSHDFADPVTWAHNKVEGNQAYTSLLYVPAKAPWDLFNREHKHGLKLYVQRVFIMDDAEQFMPNYLRFMRGLIDSNDLPLNVSREILQDNKITAALRKALTKRSLQMLEKLAKDDAEKYLQFWKEFGLVLKEGPTEDFANKETVAKLLRFASTHNDGSEQAVSLEDYILRMKEGQKAIYYITADSYVAAKNSPHLELFNKKGIEVLLLSDRIDEWMLSYLTEFDGKQLQSITKADLDLGDLADKESETQKQQDEAFGSFIERVKNLLGERVKTVRLTHNLTDTPAVVSTDNDQMTTQMAKLFAAAGQPVPEVKYTFELNPEHHLVKKVADIADETEFADWVELLLEQAMLAERGSLENPAAFIKRINKLLG</sequence>
<comment type="function">
    <text evidence="1">Molecular chaperone. Has ATPase activity.</text>
</comment>
<comment type="subunit">
    <text evidence="1">Homodimer.</text>
</comment>
<comment type="subcellular location">
    <subcellularLocation>
        <location evidence="1">Cytoplasm</location>
    </subcellularLocation>
</comment>
<comment type="similarity">
    <text evidence="1">Belongs to the heat shock protein 90 family.</text>
</comment>
<protein>
    <recommendedName>
        <fullName evidence="1">Chaperone protein HtpG</fullName>
    </recommendedName>
    <alternativeName>
        <fullName evidence="1">Heat shock protein HtpG</fullName>
    </alternativeName>
    <alternativeName>
        <fullName evidence="1">High temperature protein G</fullName>
    </alternativeName>
</protein>
<feature type="chain" id="PRO_1000014920" description="Chaperone protein HtpG">
    <location>
        <begin position="1"/>
        <end position="626"/>
    </location>
</feature>
<feature type="region of interest" description="A; substrate-binding" evidence="1">
    <location>
        <begin position="1"/>
        <end position="339"/>
    </location>
</feature>
<feature type="region of interest" description="B" evidence="1">
    <location>
        <begin position="340"/>
        <end position="555"/>
    </location>
</feature>
<feature type="region of interest" description="C" evidence="1">
    <location>
        <begin position="556"/>
        <end position="626"/>
    </location>
</feature>
<name>HTPG_HAEIE</name>
<accession>A5UB42</accession>
<dbReference type="EMBL" id="CP000671">
    <property type="protein sequence ID" value="ABQ97993.1"/>
    <property type="molecule type" value="Genomic_DNA"/>
</dbReference>
<dbReference type="SMR" id="A5UB42"/>
<dbReference type="KEGG" id="hip:CGSHiEE_02775"/>
<dbReference type="HOGENOM" id="CLU_006684_3_0_6"/>
<dbReference type="GO" id="GO:0005737">
    <property type="term" value="C:cytoplasm"/>
    <property type="evidence" value="ECO:0007669"/>
    <property type="project" value="UniProtKB-SubCell"/>
</dbReference>
<dbReference type="GO" id="GO:0005524">
    <property type="term" value="F:ATP binding"/>
    <property type="evidence" value="ECO:0007669"/>
    <property type="project" value="UniProtKB-UniRule"/>
</dbReference>
<dbReference type="GO" id="GO:0016887">
    <property type="term" value="F:ATP hydrolysis activity"/>
    <property type="evidence" value="ECO:0007669"/>
    <property type="project" value="InterPro"/>
</dbReference>
<dbReference type="GO" id="GO:0140662">
    <property type="term" value="F:ATP-dependent protein folding chaperone"/>
    <property type="evidence" value="ECO:0007669"/>
    <property type="project" value="InterPro"/>
</dbReference>
<dbReference type="GO" id="GO:0051082">
    <property type="term" value="F:unfolded protein binding"/>
    <property type="evidence" value="ECO:0007669"/>
    <property type="project" value="UniProtKB-UniRule"/>
</dbReference>
<dbReference type="CDD" id="cd16927">
    <property type="entry name" value="HATPase_Hsp90-like"/>
    <property type="match status" value="1"/>
</dbReference>
<dbReference type="FunFam" id="1.20.120.790:FF:000002">
    <property type="entry name" value="Molecular chaperone HtpG"/>
    <property type="match status" value="1"/>
</dbReference>
<dbReference type="FunFam" id="3.30.230.80:FF:000002">
    <property type="entry name" value="Molecular chaperone HtpG"/>
    <property type="match status" value="1"/>
</dbReference>
<dbReference type="FunFam" id="3.30.565.10:FF:000009">
    <property type="entry name" value="Molecular chaperone HtpG"/>
    <property type="match status" value="1"/>
</dbReference>
<dbReference type="FunFam" id="3.40.50.11260:FF:000002">
    <property type="entry name" value="Molecular chaperone HtpG"/>
    <property type="match status" value="1"/>
</dbReference>
<dbReference type="Gene3D" id="3.30.230.80">
    <property type="match status" value="1"/>
</dbReference>
<dbReference type="Gene3D" id="3.40.50.11260">
    <property type="match status" value="1"/>
</dbReference>
<dbReference type="Gene3D" id="1.20.120.790">
    <property type="entry name" value="Heat shock protein 90, C-terminal domain"/>
    <property type="match status" value="1"/>
</dbReference>
<dbReference type="Gene3D" id="3.30.565.10">
    <property type="entry name" value="Histidine kinase-like ATPase, C-terminal domain"/>
    <property type="match status" value="1"/>
</dbReference>
<dbReference type="HAMAP" id="MF_00505">
    <property type="entry name" value="HSP90"/>
    <property type="match status" value="1"/>
</dbReference>
<dbReference type="InterPro" id="IPR036890">
    <property type="entry name" value="HATPase_C_sf"/>
</dbReference>
<dbReference type="InterPro" id="IPR019805">
    <property type="entry name" value="Heat_shock_protein_90_CS"/>
</dbReference>
<dbReference type="InterPro" id="IPR037196">
    <property type="entry name" value="HSP90_C"/>
</dbReference>
<dbReference type="InterPro" id="IPR001404">
    <property type="entry name" value="Hsp90_fam"/>
</dbReference>
<dbReference type="InterPro" id="IPR020575">
    <property type="entry name" value="Hsp90_N"/>
</dbReference>
<dbReference type="InterPro" id="IPR020568">
    <property type="entry name" value="Ribosomal_Su5_D2-typ_SF"/>
</dbReference>
<dbReference type="NCBIfam" id="NF003555">
    <property type="entry name" value="PRK05218.1"/>
    <property type="match status" value="1"/>
</dbReference>
<dbReference type="PANTHER" id="PTHR11528">
    <property type="entry name" value="HEAT SHOCK PROTEIN 90 FAMILY MEMBER"/>
    <property type="match status" value="1"/>
</dbReference>
<dbReference type="Pfam" id="PF13589">
    <property type="entry name" value="HATPase_c_3"/>
    <property type="match status" value="1"/>
</dbReference>
<dbReference type="Pfam" id="PF00183">
    <property type="entry name" value="HSP90"/>
    <property type="match status" value="1"/>
</dbReference>
<dbReference type="PIRSF" id="PIRSF002583">
    <property type="entry name" value="Hsp90"/>
    <property type="match status" value="1"/>
</dbReference>
<dbReference type="PRINTS" id="PR00775">
    <property type="entry name" value="HEATSHOCK90"/>
</dbReference>
<dbReference type="SMART" id="SM00387">
    <property type="entry name" value="HATPase_c"/>
    <property type="match status" value="1"/>
</dbReference>
<dbReference type="SUPFAM" id="SSF55874">
    <property type="entry name" value="ATPase domain of HSP90 chaperone/DNA topoisomerase II/histidine kinase"/>
    <property type="match status" value="1"/>
</dbReference>
<dbReference type="SUPFAM" id="SSF110942">
    <property type="entry name" value="HSP90 C-terminal domain"/>
    <property type="match status" value="1"/>
</dbReference>
<dbReference type="SUPFAM" id="SSF54211">
    <property type="entry name" value="Ribosomal protein S5 domain 2-like"/>
    <property type="match status" value="1"/>
</dbReference>
<dbReference type="PROSITE" id="PS00298">
    <property type="entry name" value="HSP90"/>
    <property type="match status" value="1"/>
</dbReference>
<keyword id="KW-0067">ATP-binding</keyword>
<keyword id="KW-0143">Chaperone</keyword>
<keyword id="KW-0963">Cytoplasm</keyword>
<keyword id="KW-0547">Nucleotide-binding</keyword>
<keyword id="KW-0346">Stress response</keyword>
<proteinExistence type="inferred from homology"/>